<proteinExistence type="inferred from homology"/>
<sequence length="286" mass="30853">MNAYQKTIGRAVTLSGVGVHGGAPASARLLPADADTGILFQRSDIKDSAPVCAHVSQIGATDLCTSLGAREARIDTVEHLMAAISALGIDNLVVEIEGPEVPILDGTSARFIEAVDSVGVVTQDAKRRFIRILKTVRVEAGNSWGEFRPYDGTRFEVEIDFECPLIGRQKFAHDVDEETFRKELSTARTFGFMKDVERLWAAGLALGASLDNSLVIGDDNSIVNADGLRFKDEFVRHKTLDAVGDLALAGLPFIGCFSSYRGGHRLNSEAVKALLSDETAFEIIEA</sequence>
<gene>
    <name evidence="1" type="primary">lpxC</name>
    <name type="ordered locus">BAbS19_I13490</name>
</gene>
<name>LPXC_BRUA1</name>
<dbReference type="EC" id="3.5.1.108" evidence="1"/>
<dbReference type="EMBL" id="CP000887">
    <property type="protein sequence ID" value="ACD72844.1"/>
    <property type="molecule type" value="Genomic_DNA"/>
</dbReference>
<dbReference type="RefSeq" id="WP_002964532.1">
    <property type="nucleotide sequence ID" value="NC_010742.1"/>
</dbReference>
<dbReference type="SMR" id="B2S6P7"/>
<dbReference type="GeneID" id="97533370"/>
<dbReference type="KEGG" id="bmc:BAbS19_I13490"/>
<dbReference type="HOGENOM" id="CLU_046528_1_1_5"/>
<dbReference type="UniPathway" id="UPA00359">
    <property type="reaction ID" value="UER00478"/>
</dbReference>
<dbReference type="Proteomes" id="UP000002565">
    <property type="component" value="Chromosome 1"/>
</dbReference>
<dbReference type="GO" id="GO:0016020">
    <property type="term" value="C:membrane"/>
    <property type="evidence" value="ECO:0007669"/>
    <property type="project" value="GOC"/>
</dbReference>
<dbReference type="GO" id="GO:0046872">
    <property type="term" value="F:metal ion binding"/>
    <property type="evidence" value="ECO:0007669"/>
    <property type="project" value="UniProtKB-KW"/>
</dbReference>
<dbReference type="GO" id="GO:0103117">
    <property type="term" value="F:UDP-3-O-acyl-N-acetylglucosamine deacetylase activity"/>
    <property type="evidence" value="ECO:0007669"/>
    <property type="project" value="UniProtKB-UniRule"/>
</dbReference>
<dbReference type="GO" id="GO:0009245">
    <property type="term" value="P:lipid A biosynthetic process"/>
    <property type="evidence" value="ECO:0007669"/>
    <property type="project" value="UniProtKB-UniRule"/>
</dbReference>
<dbReference type="Gene3D" id="3.30.230.20">
    <property type="entry name" value="lpxc deacetylase, domain 1"/>
    <property type="match status" value="1"/>
</dbReference>
<dbReference type="Gene3D" id="3.30.1700.10">
    <property type="entry name" value="lpxc deacetylase, domain 2"/>
    <property type="match status" value="1"/>
</dbReference>
<dbReference type="HAMAP" id="MF_00388">
    <property type="entry name" value="LpxC"/>
    <property type="match status" value="1"/>
</dbReference>
<dbReference type="InterPro" id="IPR020568">
    <property type="entry name" value="Ribosomal_Su5_D2-typ_SF"/>
</dbReference>
<dbReference type="InterPro" id="IPR004463">
    <property type="entry name" value="UDP-acyl_GlcNac_deAcase"/>
</dbReference>
<dbReference type="InterPro" id="IPR011334">
    <property type="entry name" value="UDP-acyl_GlcNac_deAcase_C"/>
</dbReference>
<dbReference type="InterPro" id="IPR015870">
    <property type="entry name" value="UDP-acyl_N-AcGlcN_deAcase_N"/>
</dbReference>
<dbReference type="NCBIfam" id="TIGR00325">
    <property type="entry name" value="lpxC"/>
    <property type="match status" value="1"/>
</dbReference>
<dbReference type="PANTHER" id="PTHR33694">
    <property type="entry name" value="UDP-3-O-ACYL-N-ACETYLGLUCOSAMINE DEACETYLASE 1, MITOCHONDRIAL-RELATED"/>
    <property type="match status" value="1"/>
</dbReference>
<dbReference type="PANTHER" id="PTHR33694:SF1">
    <property type="entry name" value="UDP-3-O-ACYL-N-ACETYLGLUCOSAMINE DEACETYLASE 1, MITOCHONDRIAL-RELATED"/>
    <property type="match status" value="1"/>
</dbReference>
<dbReference type="Pfam" id="PF03331">
    <property type="entry name" value="LpxC"/>
    <property type="match status" value="1"/>
</dbReference>
<dbReference type="SUPFAM" id="SSF54211">
    <property type="entry name" value="Ribosomal protein S5 domain 2-like"/>
    <property type="match status" value="2"/>
</dbReference>
<reference key="1">
    <citation type="journal article" date="2008" name="PLoS ONE">
        <title>Genome sequence of Brucella abortus vaccine strain S19 compared to virulent strains yields candidate virulence genes.</title>
        <authorList>
            <person name="Crasta O.R."/>
            <person name="Folkerts O."/>
            <person name="Fei Z."/>
            <person name="Mane S.P."/>
            <person name="Evans C."/>
            <person name="Martino-Catt S."/>
            <person name="Bricker B."/>
            <person name="Yu G."/>
            <person name="Du L."/>
            <person name="Sobral B.W."/>
        </authorList>
    </citation>
    <scope>NUCLEOTIDE SEQUENCE [LARGE SCALE GENOMIC DNA]</scope>
    <source>
        <strain>S19</strain>
    </source>
</reference>
<feature type="chain" id="PRO_1000190887" description="UDP-3-O-acyl-N-acetylglucosamine deacetylase">
    <location>
        <begin position="1"/>
        <end position="286"/>
    </location>
</feature>
<feature type="active site" description="Proton donor" evidence="1">
    <location>
        <position position="264"/>
    </location>
</feature>
<feature type="binding site" evidence="1">
    <location>
        <position position="79"/>
    </location>
    <ligand>
        <name>Zn(2+)</name>
        <dbReference type="ChEBI" id="CHEBI:29105"/>
    </ligand>
</feature>
<feature type="binding site" evidence="1">
    <location>
        <position position="237"/>
    </location>
    <ligand>
        <name>Zn(2+)</name>
        <dbReference type="ChEBI" id="CHEBI:29105"/>
    </ligand>
</feature>
<feature type="binding site" evidence="1">
    <location>
        <position position="241"/>
    </location>
    <ligand>
        <name>Zn(2+)</name>
        <dbReference type="ChEBI" id="CHEBI:29105"/>
    </ligand>
</feature>
<comment type="function">
    <text evidence="1">Catalyzes the hydrolysis of UDP-3-O-myristoyl-N-acetylglucosamine to form UDP-3-O-myristoylglucosamine and acetate, the committed step in lipid A biosynthesis.</text>
</comment>
<comment type="catalytic activity">
    <reaction evidence="1">
        <text>a UDP-3-O-[(3R)-3-hydroxyacyl]-N-acetyl-alpha-D-glucosamine + H2O = a UDP-3-O-[(3R)-3-hydroxyacyl]-alpha-D-glucosamine + acetate</text>
        <dbReference type="Rhea" id="RHEA:67816"/>
        <dbReference type="ChEBI" id="CHEBI:15377"/>
        <dbReference type="ChEBI" id="CHEBI:30089"/>
        <dbReference type="ChEBI" id="CHEBI:137740"/>
        <dbReference type="ChEBI" id="CHEBI:173225"/>
        <dbReference type="EC" id="3.5.1.108"/>
    </reaction>
</comment>
<comment type="cofactor">
    <cofactor evidence="1">
        <name>Zn(2+)</name>
        <dbReference type="ChEBI" id="CHEBI:29105"/>
    </cofactor>
</comment>
<comment type="pathway">
    <text evidence="1">Glycolipid biosynthesis; lipid IV(A) biosynthesis; lipid IV(A) from (3R)-3-hydroxytetradecanoyl-[acyl-carrier-protein] and UDP-N-acetyl-alpha-D-glucosamine: step 2/6.</text>
</comment>
<comment type="similarity">
    <text evidence="1">Belongs to the LpxC family.</text>
</comment>
<evidence type="ECO:0000255" key="1">
    <source>
        <dbReference type="HAMAP-Rule" id="MF_00388"/>
    </source>
</evidence>
<organism>
    <name type="scientific">Brucella abortus (strain S19)</name>
    <dbReference type="NCBI Taxonomy" id="430066"/>
    <lineage>
        <taxon>Bacteria</taxon>
        <taxon>Pseudomonadati</taxon>
        <taxon>Pseudomonadota</taxon>
        <taxon>Alphaproteobacteria</taxon>
        <taxon>Hyphomicrobiales</taxon>
        <taxon>Brucellaceae</taxon>
        <taxon>Brucella/Ochrobactrum group</taxon>
        <taxon>Brucella</taxon>
    </lineage>
</organism>
<protein>
    <recommendedName>
        <fullName evidence="1">UDP-3-O-acyl-N-acetylglucosamine deacetylase</fullName>
        <shortName evidence="1">UDP-3-O-acyl-GlcNAc deacetylase</shortName>
        <ecNumber evidence="1">3.5.1.108</ecNumber>
    </recommendedName>
    <alternativeName>
        <fullName evidence="1">UDP-3-O-[R-3-hydroxymyristoyl]-N-acetylglucosamine deacetylase</fullName>
    </alternativeName>
</protein>
<keyword id="KW-0378">Hydrolase</keyword>
<keyword id="KW-0441">Lipid A biosynthesis</keyword>
<keyword id="KW-0444">Lipid biosynthesis</keyword>
<keyword id="KW-0443">Lipid metabolism</keyword>
<keyword id="KW-0479">Metal-binding</keyword>
<keyword id="KW-0862">Zinc</keyword>
<accession>B2S6P7</accession>